<protein>
    <recommendedName>
        <fullName>Alcohol dehydrogenase 1</fullName>
        <ecNumber>1.1.1.1</ecNumber>
    </recommendedName>
    <alternativeName>
        <fullName>ADH-A2</fullName>
    </alternativeName>
    <alternativeName>
        <fullName>Alcohol dehydrogenase A subunit</fullName>
    </alternativeName>
</protein>
<sequence length="375" mass="39771">MSTAGKVIKCKAAVLWELHKPFTIEDIEVAPPKAHEVRIKMVATGVCRSDDHVVSGTLVTPLPAVLGHEGAGIVESVGEGVTCVKPGDKVIPLFSPQCGECRICKHPESNFCSRSDLLMPRGTLREGTSRFSCKGKQIHNFISTSTFSQYTVVDDIAVAKIDGASPLDKVCLIGCGFSTGYGSAVKVAKVTPGSTCAVFGLGGVGLSVIIGCKAAGAARIIAVDINKDKFAKAKELGATECINPQDYSKPIQEVLQEMTDGGVDFSFEVIGRLDTMTSALLSCHAACGVSVVVGVPPNAQNLSMNPMLLLLGRTWKGAIFGGFKSKDSVPKLVADFMAKKFPLDPLITHVLPFEKINEAFDLLRSGKSIRTVLTF</sequence>
<dbReference type="EC" id="1.1.1.1"/>
<dbReference type="EMBL" id="M18480">
    <property type="protein sequence ID" value="AAA37178.1"/>
    <property type="molecule type" value="Genomic_DNA"/>
</dbReference>
<dbReference type="EMBL" id="M18472">
    <property type="protein sequence ID" value="AAA37178.1"/>
    <property type="status" value="JOINED"/>
    <property type="molecule type" value="Genomic_DNA"/>
</dbReference>
<dbReference type="EMBL" id="M18473">
    <property type="protein sequence ID" value="AAA37178.1"/>
    <property type="status" value="JOINED"/>
    <property type="molecule type" value="Genomic_DNA"/>
</dbReference>
<dbReference type="EMBL" id="M18474">
    <property type="protein sequence ID" value="AAA37178.1"/>
    <property type="status" value="JOINED"/>
    <property type="molecule type" value="Genomic_DNA"/>
</dbReference>
<dbReference type="EMBL" id="M18475">
    <property type="protein sequence ID" value="AAA37178.1"/>
    <property type="status" value="JOINED"/>
    <property type="molecule type" value="Genomic_DNA"/>
</dbReference>
<dbReference type="EMBL" id="M18476">
    <property type="protein sequence ID" value="AAA37178.1"/>
    <property type="status" value="JOINED"/>
    <property type="molecule type" value="Genomic_DNA"/>
</dbReference>
<dbReference type="EMBL" id="M18477">
    <property type="protein sequence ID" value="AAA37178.1"/>
    <property type="status" value="JOINED"/>
    <property type="molecule type" value="Genomic_DNA"/>
</dbReference>
<dbReference type="EMBL" id="M18478">
    <property type="protein sequence ID" value="AAA37178.1"/>
    <property type="status" value="JOINED"/>
    <property type="molecule type" value="Genomic_DNA"/>
</dbReference>
<dbReference type="EMBL" id="M22679">
    <property type="protein sequence ID" value="AAA37179.1"/>
    <property type="molecule type" value="Genomic_DNA"/>
</dbReference>
<dbReference type="EMBL" id="M22671">
    <property type="protein sequence ID" value="AAA37179.1"/>
    <property type="status" value="JOINED"/>
    <property type="molecule type" value="Genomic_DNA"/>
</dbReference>
<dbReference type="EMBL" id="M22672">
    <property type="protein sequence ID" value="AAA37179.1"/>
    <property type="status" value="JOINED"/>
    <property type="molecule type" value="Genomic_DNA"/>
</dbReference>
<dbReference type="EMBL" id="M22673">
    <property type="protein sequence ID" value="AAA37179.1"/>
    <property type="status" value="JOINED"/>
    <property type="molecule type" value="Genomic_DNA"/>
</dbReference>
<dbReference type="EMBL" id="M22674">
    <property type="protein sequence ID" value="AAA37179.1"/>
    <property type="status" value="JOINED"/>
    <property type="molecule type" value="Genomic_DNA"/>
</dbReference>
<dbReference type="EMBL" id="M22675">
    <property type="protein sequence ID" value="AAA37179.1"/>
    <property type="status" value="JOINED"/>
    <property type="molecule type" value="Genomic_DNA"/>
</dbReference>
<dbReference type="EMBL" id="M22676">
    <property type="protein sequence ID" value="AAA37179.1"/>
    <property type="status" value="JOINED"/>
    <property type="molecule type" value="Genomic_DNA"/>
</dbReference>
<dbReference type="EMBL" id="M22677">
    <property type="protein sequence ID" value="AAA37179.1"/>
    <property type="status" value="JOINED"/>
    <property type="molecule type" value="Genomic_DNA"/>
</dbReference>
<dbReference type="EMBL" id="M11307">
    <property type="protein sequence ID" value="AAA37180.1"/>
    <property type="molecule type" value="mRNA"/>
</dbReference>
<dbReference type="EMBL" id="BC013477">
    <property type="protein sequence ID" value="AAH13477.1"/>
    <property type="molecule type" value="mRNA"/>
</dbReference>
<dbReference type="EMBL" id="BC054467">
    <property type="protein sequence ID" value="AAH54467.1"/>
    <property type="molecule type" value="mRNA"/>
</dbReference>
<dbReference type="EMBL" id="Z32540">
    <property type="status" value="NOT_ANNOTATED_CDS"/>
    <property type="molecule type" value="Genomic_DNA"/>
</dbReference>
<dbReference type="EMBL" id="M22611">
    <property type="protein sequence ID" value="AAA37181.1"/>
    <property type="molecule type" value="mRNA"/>
</dbReference>
<dbReference type="CCDS" id="CCDS17867.1"/>
<dbReference type="PIR" id="A27322">
    <property type="entry name" value="DEMSAA"/>
</dbReference>
<dbReference type="RefSeq" id="NP_031435.1">
    <property type="nucleotide sequence ID" value="NM_007409.3"/>
</dbReference>
<dbReference type="SMR" id="P00329"/>
<dbReference type="BioGRID" id="197984">
    <property type="interactions" value="2"/>
</dbReference>
<dbReference type="FunCoup" id="P00329">
    <property type="interactions" value="331"/>
</dbReference>
<dbReference type="STRING" id="10090.ENSMUSP00000004232"/>
<dbReference type="GlyGen" id="P00329">
    <property type="glycosylation" value="3 sites, 1 O-linked glycan (2 sites)"/>
</dbReference>
<dbReference type="iPTMnet" id="P00329"/>
<dbReference type="PhosphoSitePlus" id="P00329"/>
<dbReference type="SwissPalm" id="P00329"/>
<dbReference type="jPOST" id="P00329"/>
<dbReference type="PaxDb" id="10090-ENSMUSP00000004232"/>
<dbReference type="PeptideAtlas" id="P00329"/>
<dbReference type="ProteomicsDB" id="296067"/>
<dbReference type="DNASU" id="11522"/>
<dbReference type="Ensembl" id="ENSMUST00000004232.10">
    <property type="protein sequence ID" value="ENSMUSP00000004232.10"/>
    <property type="gene ID" value="ENSMUSG00000074207.11"/>
</dbReference>
<dbReference type="GeneID" id="11522"/>
<dbReference type="KEGG" id="mmu:11522"/>
<dbReference type="UCSC" id="uc008rnf.1">
    <property type="organism name" value="mouse"/>
</dbReference>
<dbReference type="AGR" id="MGI:87921"/>
<dbReference type="CTD" id="11522"/>
<dbReference type="MGI" id="MGI:87921">
    <property type="gene designation" value="Adh1"/>
</dbReference>
<dbReference type="VEuPathDB" id="HostDB:ENSMUSG00000074207"/>
<dbReference type="eggNOG" id="KOG0022">
    <property type="taxonomic scope" value="Eukaryota"/>
</dbReference>
<dbReference type="GeneTree" id="ENSGT00940000155234"/>
<dbReference type="HOGENOM" id="CLU_026673_14_0_1"/>
<dbReference type="InParanoid" id="P00329"/>
<dbReference type="OMA" id="YIFAVEP"/>
<dbReference type="OrthoDB" id="417550at2759"/>
<dbReference type="PhylomeDB" id="P00329"/>
<dbReference type="TreeFam" id="TF300429"/>
<dbReference type="Reactome" id="R-MMU-2161541">
    <property type="pathway name" value="Abacavir metabolism"/>
</dbReference>
<dbReference type="Reactome" id="R-MMU-5365859">
    <property type="pathway name" value="RA biosynthesis pathway"/>
</dbReference>
<dbReference type="Reactome" id="R-MMU-71384">
    <property type="pathway name" value="Ethanol oxidation"/>
</dbReference>
<dbReference type="SABIO-RK" id="P00329"/>
<dbReference type="BioGRID-ORCS" id="11522">
    <property type="hits" value="3 hits in 79 CRISPR screens"/>
</dbReference>
<dbReference type="ChiTaRS" id="Adh1">
    <property type="organism name" value="mouse"/>
</dbReference>
<dbReference type="PRO" id="PR:P00329"/>
<dbReference type="Proteomes" id="UP000000589">
    <property type="component" value="Chromosome 3"/>
</dbReference>
<dbReference type="RNAct" id="P00329">
    <property type="molecule type" value="protein"/>
</dbReference>
<dbReference type="Bgee" id="ENSMUSG00000074207">
    <property type="expression patterns" value="Expressed in conjunctival fornix and 213 other cell types or tissues"/>
</dbReference>
<dbReference type="ExpressionAtlas" id="P00329">
    <property type="expression patterns" value="baseline and differential"/>
</dbReference>
<dbReference type="GO" id="GO:0005739">
    <property type="term" value="C:mitochondrion"/>
    <property type="evidence" value="ECO:0000314"/>
    <property type="project" value="MGI"/>
</dbReference>
<dbReference type="GO" id="GO:0004022">
    <property type="term" value="F:alcohol dehydrogenase (NAD+) activity"/>
    <property type="evidence" value="ECO:0000314"/>
    <property type="project" value="MGI"/>
</dbReference>
<dbReference type="GO" id="GO:0004745">
    <property type="term" value="F:all-trans-retinol dehydrogenase (NAD+) activity"/>
    <property type="evidence" value="ECO:0000316"/>
    <property type="project" value="MGI"/>
</dbReference>
<dbReference type="GO" id="GO:0042802">
    <property type="term" value="F:identical protein binding"/>
    <property type="evidence" value="ECO:0000353"/>
    <property type="project" value="MGI"/>
</dbReference>
<dbReference type="GO" id="GO:0008270">
    <property type="term" value="F:zinc ion binding"/>
    <property type="evidence" value="ECO:0007669"/>
    <property type="project" value="InterPro"/>
</dbReference>
<dbReference type="GO" id="GO:0031100">
    <property type="term" value="P:animal organ regeneration"/>
    <property type="evidence" value="ECO:0007669"/>
    <property type="project" value="Ensembl"/>
</dbReference>
<dbReference type="GO" id="GO:0048149">
    <property type="term" value="P:behavioral response to ethanol"/>
    <property type="evidence" value="ECO:0000315"/>
    <property type="project" value="MGI"/>
</dbReference>
<dbReference type="GO" id="GO:0006068">
    <property type="term" value="P:ethanol catabolic process"/>
    <property type="evidence" value="ECO:0000314"/>
    <property type="project" value="MGI"/>
</dbReference>
<dbReference type="GO" id="GO:0032570">
    <property type="term" value="P:response to progesterone"/>
    <property type="evidence" value="ECO:0007669"/>
    <property type="project" value="Ensembl"/>
</dbReference>
<dbReference type="GO" id="GO:0032526">
    <property type="term" value="P:response to retinoic acid"/>
    <property type="evidence" value="ECO:0000314"/>
    <property type="project" value="MGI"/>
</dbReference>
<dbReference type="GO" id="GO:0048545">
    <property type="term" value="P:response to steroid hormone"/>
    <property type="evidence" value="ECO:0000314"/>
    <property type="project" value="MGI"/>
</dbReference>
<dbReference type="GO" id="GO:0033574">
    <property type="term" value="P:response to testosterone"/>
    <property type="evidence" value="ECO:0000314"/>
    <property type="project" value="MGI"/>
</dbReference>
<dbReference type="GO" id="GO:0042573">
    <property type="term" value="P:retinoic acid metabolic process"/>
    <property type="evidence" value="ECO:0000315"/>
    <property type="project" value="MGI"/>
</dbReference>
<dbReference type="GO" id="GO:0001523">
    <property type="term" value="P:retinoid metabolic process"/>
    <property type="evidence" value="ECO:0000315"/>
    <property type="project" value="MGI"/>
</dbReference>
<dbReference type="GO" id="GO:0042572">
    <property type="term" value="P:retinol metabolic process"/>
    <property type="evidence" value="ECO:0000315"/>
    <property type="project" value="MGI"/>
</dbReference>
<dbReference type="CDD" id="cd08299">
    <property type="entry name" value="alcohol_DH_class_I_II_IV"/>
    <property type="match status" value="1"/>
</dbReference>
<dbReference type="FunFam" id="3.40.50.720:FF:000003">
    <property type="entry name" value="S-(hydroxymethyl)glutathione dehydrogenase"/>
    <property type="match status" value="1"/>
</dbReference>
<dbReference type="FunFam" id="3.90.180.10:FF:000001">
    <property type="entry name" value="S-(hydroxymethyl)glutathione dehydrogenase"/>
    <property type="match status" value="1"/>
</dbReference>
<dbReference type="Gene3D" id="3.90.180.10">
    <property type="entry name" value="Medium-chain alcohol dehydrogenases, catalytic domain"/>
    <property type="match status" value="1"/>
</dbReference>
<dbReference type="Gene3D" id="3.40.50.720">
    <property type="entry name" value="NAD(P)-binding Rossmann-like Domain"/>
    <property type="match status" value="1"/>
</dbReference>
<dbReference type="InterPro" id="IPR013149">
    <property type="entry name" value="ADH-like_C"/>
</dbReference>
<dbReference type="InterPro" id="IPR013154">
    <property type="entry name" value="ADH-like_N"/>
</dbReference>
<dbReference type="InterPro" id="IPR002328">
    <property type="entry name" value="ADH_Zn_CS"/>
</dbReference>
<dbReference type="InterPro" id="IPR011032">
    <property type="entry name" value="GroES-like_sf"/>
</dbReference>
<dbReference type="InterPro" id="IPR036291">
    <property type="entry name" value="NAD(P)-bd_dom_sf"/>
</dbReference>
<dbReference type="InterPro" id="IPR020843">
    <property type="entry name" value="PKS_ER"/>
</dbReference>
<dbReference type="PANTHER" id="PTHR43880">
    <property type="entry name" value="ALCOHOL DEHYDROGENASE"/>
    <property type="match status" value="1"/>
</dbReference>
<dbReference type="PANTHER" id="PTHR43880:SF1">
    <property type="entry name" value="ALCOHOL DEHYDROGENASE 1A"/>
    <property type="match status" value="1"/>
</dbReference>
<dbReference type="Pfam" id="PF08240">
    <property type="entry name" value="ADH_N"/>
    <property type="match status" value="1"/>
</dbReference>
<dbReference type="Pfam" id="PF00107">
    <property type="entry name" value="ADH_zinc_N"/>
    <property type="match status" value="1"/>
</dbReference>
<dbReference type="SMART" id="SM00829">
    <property type="entry name" value="PKS_ER"/>
    <property type="match status" value="1"/>
</dbReference>
<dbReference type="SUPFAM" id="SSF50129">
    <property type="entry name" value="GroES-like"/>
    <property type="match status" value="2"/>
</dbReference>
<dbReference type="SUPFAM" id="SSF51735">
    <property type="entry name" value="NAD(P)-binding Rossmann-fold domains"/>
    <property type="match status" value="1"/>
</dbReference>
<dbReference type="PROSITE" id="PS00059">
    <property type="entry name" value="ADH_ZINC"/>
    <property type="match status" value="1"/>
</dbReference>
<organism>
    <name type="scientific">Mus musculus</name>
    <name type="common">Mouse</name>
    <dbReference type="NCBI Taxonomy" id="10090"/>
    <lineage>
        <taxon>Eukaryota</taxon>
        <taxon>Metazoa</taxon>
        <taxon>Chordata</taxon>
        <taxon>Craniata</taxon>
        <taxon>Vertebrata</taxon>
        <taxon>Euteleostomi</taxon>
        <taxon>Mammalia</taxon>
        <taxon>Eutheria</taxon>
        <taxon>Euarchontoglires</taxon>
        <taxon>Glires</taxon>
        <taxon>Rodentia</taxon>
        <taxon>Myomorpha</taxon>
        <taxon>Muroidea</taxon>
        <taxon>Muridae</taxon>
        <taxon>Murinae</taxon>
        <taxon>Mus</taxon>
        <taxon>Mus</taxon>
    </lineage>
</organism>
<accession>P00329</accession>
<comment type="catalytic activity">
    <reaction>
        <text>a primary alcohol + NAD(+) = an aldehyde + NADH + H(+)</text>
        <dbReference type="Rhea" id="RHEA:10736"/>
        <dbReference type="ChEBI" id="CHEBI:15378"/>
        <dbReference type="ChEBI" id="CHEBI:15734"/>
        <dbReference type="ChEBI" id="CHEBI:17478"/>
        <dbReference type="ChEBI" id="CHEBI:57540"/>
        <dbReference type="ChEBI" id="CHEBI:57945"/>
        <dbReference type="EC" id="1.1.1.1"/>
    </reaction>
</comment>
<comment type="catalytic activity">
    <reaction>
        <text>a secondary alcohol + NAD(+) = a ketone + NADH + H(+)</text>
        <dbReference type="Rhea" id="RHEA:10740"/>
        <dbReference type="ChEBI" id="CHEBI:15378"/>
        <dbReference type="ChEBI" id="CHEBI:17087"/>
        <dbReference type="ChEBI" id="CHEBI:35681"/>
        <dbReference type="ChEBI" id="CHEBI:57540"/>
        <dbReference type="ChEBI" id="CHEBI:57945"/>
        <dbReference type="EC" id="1.1.1.1"/>
    </reaction>
</comment>
<comment type="cofactor">
    <cofactor>
        <name>Zn(2+)</name>
        <dbReference type="ChEBI" id="CHEBI:29105"/>
    </cofactor>
    <text>Binds 2 Zn(2+) ions per subunit.</text>
</comment>
<comment type="subunit">
    <text>Dimer of identical or non-identical chains of three types (A, B, C), which are coded by 3 separate genes at different loci.</text>
</comment>
<comment type="subcellular location">
    <subcellularLocation>
        <location>Cytoplasm</location>
    </subcellularLocation>
</comment>
<comment type="tissue specificity">
    <text evidence="3">Expressed at high levels in the liver, small intestine and eye, at moderate levels in kidney, ovary and uterus, and at low levels in the spinal cord, thymus, heart, stomach mucosa, skin and testis.</text>
</comment>
<comment type="similarity">
    <text evidence="4">Belongs to the zinc-containing alcohol dehydrogenase family. Class-I subfamily.</text>
</comment>
<proteinExistence type="evidence at protein level"/>
<evidence type="ECO:0000250" key="1"/>
<evidence type="ECO:0000250" key="2">
    <source>
        <dbReference type="UniProtKB" id="P06757"/>
    </source>
</evidence>
<evidence type="ECO:0000269" key="3">
    <source>
    </source>
</evidence>
<evidence type="ECO:0000305" key="4"/>
<evidence type="ECO:0007744" key="5">
    <source>
    </source>
</evidence>
<feature type="initiator methionine" description="Removed" evidence="2">
    <location>
        <position position="1"/>
    </location>
</feature>
<feature type="chain" id="PRO_0000160666" description="Alcohol dehydrogenase 1">
    <location>
        <begin position="2"/>
        <end position="375"/>
    </location>
</feature>
<feature type="binding site">
    <location>
        <position position="47"/>
    </location>
    <ligand>
        <name>Zn(2+)</name>
        <dbReference type="ChEBI" id="CHEBI:29105"/>
        <label>1</label>
        <note>catalytic</note>
    </ligand>
</feature>
<feature type="binding site">
    <location>
        <position position="68"/>
    </location>
    <ligand>
        <name>Zn(2+)</name>
        <dbReference type="ChEBI" id="CHEBI:29105"/>
        <label>1</label>
        <note>catalytic</note>
    </ligand>
</feature>
<feature type="binding site">
    <location>
        <position position="98"/>
    </location>
    <ligand>
        <name>Zn(2+)</name>
        <dbReference type="ChEBI" id="CHEBI:29105"/>
        <label>2</label>
    </ligand>
</feature>
<feature type="binding site">
    <location>
        <position position="101"/>
    </location>
    <ligand>
        <name>Zn(2+)</name>
        <dbReference type="ChEBI" id="CHEBI:29105"/>
        <label>2</label>
    </ligand>
</feature>
<feature type="binding site">
    <location>
        <position position="104"/>
    </location>
    <ligand>
        <name>Zn(2+)</name>
        <dbReference type="ChEBI" id="CHEBI:29105"/>
        <label>2</label>
    </ligand>
</feature>
<feature type="binding site">
    <location>
        <position position="112"/>
    </location>
    <ligand>
        <name>Zn(2+)</name>
        <dbReference type="ChEBI" id="CHEBI:29105"/>
        <label>2</label>
    </ligand>
</feature>
<feature type="binding site">
    <location>
        <position position="175"/>
    </location>
    <ligand>
        <name>Zn(2+)</name>
        <dbReference type="ChEBI" id="CHEBI:29105"/>
        <label>1</label>
        <note>catalytic</note>
    </ligand>
</feature>
<feature type="binding site" evidence="1">
    <location>
        <begin position="200"/>
        <end position="205"/>
    </location>
    <ligand>
        <name>NAD(+)</name>
        <dbReference type="ChEBI" id="CHEBI:57540"/>
    </ligand>
</feature>
<feature type="binding site" evidence="1">
    <location>
        <position position="224"/>
    </location>
    <ligand>
        <name>NAD(+)</name>
        <dbReference type="ChEBI" id="CHEBI:57540"/>
    </ligand>
</feature>
<feature type="binding site" evidence="1">
    <location>
        <position position="229"/>
    </location>
    <ligand>
        <name>NAD(+)</name>
        <dbReference type="ChEBI" id="CHEBI:57540"/>
    </ligand>
</feature>
<feature type="binding site" evidence="1">
    <location>
        <begin position="293"/>
        <end position="295"/>
    </location>
    <ligand>
        <name>NAD(+)</name>
        <dbReference type="ChEBI" id="CHEBI:57540"/>
    </ligand>
</feature>
<feature type="binding site" evidence="1">
    <location>
        <position position="370"/>
    </location>
    <ligand>
        <name>NAD(+)</name>
        <dbReference type="ChEBI" id="CHEBI:57540"/>
    </ligand>
</feature>
<feature type="modified residue" description="N-acetylserine" evidence="2">
    <location>
        <position position="2"/>
    </location>
</feature>
<feature type="modified residue" description="N6-succinyllysine" evidence="5">
    <location>
        <position position="234"/>
    </location>
</feature>
<feature type="modified residue" description="N6-succinyllysine" evidence="5">
    <location>
        <position position="340"/>
    </location>
</feature>
<gene>
    <name type="primary">Adh1</name>
    <name type="synonym">Adh-1</name>
</gene>
<reference key="1">
    <citation type="journal article" date="1985" name="Proc. Natl. Acad. Sci. U.S.A.">
        <title>Cloning and sequencing of cDNA encoding the complete mouse liver alcohol dehydrogenase.</title>
        <authorList>
            <person name="Edenberg H.J."/>
            <person name="Zhang K."/>
            <person name="Fong K."/>
            <person name="Bosron W.F."/>
            <person name="Li T.-K."/>
        </authorList>
    </citation>
    <scope>NUCLEOTIDE SEQUENCE [MRNA]</scope>
</reference>
<reference key="2">
    <citation type="journal article" date="1987" name="Gene">
        <title>Molecular analysis of mouse alcohol dehydrogenase: nucleotide sequence of the Adh-1 gene and genetic mapping of a related nucleotide sequence to chromosome 3.</title>
        <authorList>
            <person name="Ceci J.D."/>
            <person name="Zheng Y.W."/>
            <person name="Felder M.R."/>
        </authorList>
    </citation>
    <scope>NUCLEOTIDE SEQUENCE [GENOMIC DNA]</scope>
</reference>
<reference key="3">
    <citation type="journal article" date="1987" name="Gene">
        <title>Structure of the mouse Adh-1 gene and identification of a deletion in a long alternating purine-pyrimidine sequence in the first intron of strains expressing low alcohol dehydrogenase activity.</title>
        <authorList>
            <person name="Zhang K."/>
            <person name="Bosron W.F."/>
            <person name="Edenberg H.J."/>
        </authorList>
    </citation>
    <scope>NUCLEOTIDE SEQUENCE [GENOMIC DNA]</scope>
</reference>
<reference key="4">
    <citation type="journal article" date="2004" name="Genome Res.">
        <title>The status, quality, and expansion of the NIH full-length cDNA project: the Mammalian Gene Collection (MGC).</title>
        <authorList>
            <consortium name="The MGC Project Team"/>
        </authorList>
    </citation>
    <scope>NUCLEOTIDE SEQUENCE [LARGE SCALE MRNA]</scope>
    <source>
        <strain>FVB/N</strain>
        <tissue>Colon</tissue>
        <tissue>Kidney</tissue>
    </source>
</reference>
<reference key="5">
    <citation type="journal article" date="1994" name="Nucleic Acids Res.">
        <title>Isolation of genomic DNA fragments corresponding to genes modulated in vivo by a transcription factor.</title>
        <authorList>
            <person name="Caubin J."/>
            <person name="Iglesias T."/>
            <person name="Bernal J."/>
            <person name="Munoz A."/>
            <person name="Marquez G."/>
            <person name="Barbero J.L."/>
            <person name="Zaballos A."/>
        </authorList>
    </citation>
    <scope>NUCLEOTIDE SEQUENCE [GENOMIC DNA] OF 8-51</scope>
</reference>
<reference key="6">
    <citation type="journal article" date="1986" name="Gene">
        <title>Androgen induction of alcohol dehydrogenase in mouse kidney. Studies with a cDNA probe confirmed by nucleotide sequence analysis.</title>
        <authorList>
            <person name="Ceci J.D."/>
            <person name="Lawther R."/>
            <person name="Duester G."/>
            <person name="Hatfield G.W."/>
            <person name="Smith M."/>
            <person name="O'Malley M.P."/>
            <person name="Felder M.R."/>
        </authorList>
    </citation>
    <scope>NUCLEOTIDE SEQUENCE [MRNA] OF 224-375</scope>
    <source>
        <strain>SWR/J</strain>
        <tissue>Liver</tissue>
    </source>
</reference>
<reference key="7">
    <citation type="journal article" date="1995" name="J. Biol. Chem.">
        <title>Cloning of the mouse class IV alcohol dehydrogenase (retinol dehydrogenase) cDNA and tissue-specific expression patterns of the murine ADH gene family.</title>
        <authorList>
            <person name="Zgombic-Knight M."/>
            <person name="Ang H.L."/>
            <person name="Foglio M.H."/>
            <person name="Duester G."/>
        </authorList>
    </citation>
    <scope>TISSUE SPECIFICITY</scope>
    <source>
        <strain>FVB/N</strain>
    </source>
</reference>
<reference key="8">
    <citation type="journal article" date="2010" name="Cell">
        <title>A tissue-specific atlas of mouse protein phosphorylation and expression.</title>
        <authorList>
            <person name="Huttlin E.L."/>
            <person name="Jedrychowski M.P."/>
            <person name="Elias J.E."/>
            <person name="Goswami T."/>
            <person name="Rad R."/>
            <person name="Beausoleil S.A."/>
            <person name="Villen J."/>
            <person name="Haas W."/>
            <person name="Sowa M.E."/>
            <person name="Gygi S.P."/>
        </authorList>
    </citation>
    <scope>IDENTIFICATION BY MASS SPECTROMETRY [LARGE SCALE ANALYSIS]</scope>
    <source>
        <tissue>Brown adipose tissue</tissue>
        <tissue>Heart</tissue>
        <tissue>Kidney</tissue>
        <tissue>Liver</tissue>
        <tissue>Lung</tissue>
        <tissue>Pancreas</tissue>
        <tissue>Testis</tissue>
    </source>
</reference>
<reference key="9">
    <citation type="journal article" date="2013" name="Mol. Cell">
        <title>SIRT5-mediated lysine desuccinylation impacts diverse metabolic pathways.</title>
        <authorList>
            <person name="Park J."/>
            <person name="Chen Y."/>
            <person name="Tishkoff D.X."/>
            <person name="Peng C."/>
            <person name="Tan M."/>
            <person name="Dai L."/>
            <person name="Xie Z."/>
            <person name="Zhang Y."/>
            <person name="Zwaans B.M."/>
            <person name="Skinner M.E."/>
            <person name="Lombard D.B."/>
            <person name="Zhao Y."/>
        </authorList>
    </citation>
    <scope>SUCCINYLATION [LARGE SCALE ANALYSIS] AT LYS-234 AND LYS-340</scope>
    <scope>IDENTIFICATION BY MASS SPECTROMETRY [LARGE SCALE ANALYSIS]</scope>
    <source>
        <tissue>Liver</tissue>
    </source>
</reference>
<name>ADH1_MOUSE</name>
<keyword id="KW-0007">Acetylation</keyword>
<keyword id="KW-0963">Cytoplasm</keyword>
<keyword id="KW-0479">Metal-binding</keyword>
<keyword id="KW-0520">NAD</keyword>
<keyword id="KW-0560">Oxidoreductase</keyword>
<keyword id="KW-1185">Reference proteome</keyword>
<keyword id="KW-0862">Zinc</keyword>